<feature type="chain" id="PRO_0000225163" description="Crossover junction endodeoxyribonuclease RuvC">
    <location>
        <begin position="1"/>
        <end position="174"/>
    </location>
</feature>
<feature type="active site" evidence="1">
    <location>
        <position position="8"/>
    </location>
</feature>
<feature type="active site" evidence="1">
    <location>
        <position position="67"/>
    </location>
</feature>
<feature type="active site" evidence="1">
    <location>
        <position position="139"/>
    </location>
</feature>
<feature type="binding site" evidence="1">
    <location>
        <position position="8"/>
    </location>
    <ligand>
        <name>Mg(2+)</name>
        <dbReference type="ChEBI" id="CHEBI:18420"/>
        <label>1</label>
    </ligand>
</feature>
<feature type="binding site" evidence="1">
    <location>
        <position position="67"/>
    </location>
    <ligand>
        <name>Mg(2+)</name>
        <dbReference type="ChEBI" id="CHEBI:18420"/>
        <label>2</label>
    </ligand>
</feature>
<feature type="binding site" evidence="1">
    <location>
        <position position="139"/>
    </location>
    <ligand>
        <name>Mg(2+)</name>
        <dbReference type="ChEBI" id="CHEBI:18420"/>
        <label>1</label>
    </ligand>
</feature>
<sequence length="174" mass="18590">MAIILGIDPGSRLTGYGVVAHQGSKFTYLGSGCIKLADHEFHIRLKMIYQGITQLIEQFSPETFAIEKVFMAHNPDSALKLGQARGAAIVGAAMADLPVFEYSARQIKQAVVGNGGADKTQVQHMVKNILKLPGTPQADAADALAIAICHAHSEQNLIKLAGSASKTVRGRLRK</sequence>
<reference key="1">
    <citation type="journal article" date="2005" name="Genome Res.">
        <title>Coping with cold: the genome of the versatile marine Antarctica bacterium Pseudoalteromonas haloplanktis TAC125.</title>
        <authorList>
            <person name="Medigue C."/>
            <person name="Krin E."/>
            <person name="Pascal G."/>
            <person name="Barbe V."/>
            <person name="Bernsel A."/>
            <person name="Bertin P.N."/>
            <person name="Cheung F."/>
            <person name="Cruveiller S."/>
            <person name="D'Amico S."/>
            <person name="Duilio A."/>
            <person name="Fang G."/>
            <person name="Feller G."/>
            <person name="Ho C."/>
            <person name="Mangenot S."/>
            <person name="Marino G."/>
            <person name="Nilsson J."/>
            <person name="Parrilli E."/>
            <person name="Rocha E.P.C."/>
            <person name="Rouy Z."/>
            <person name="Sekowska A."/>
            <person name="Tutino M.L."/>
            <person name="Vallenet D."/>
            <person name="von Heijne G."/>
            <person name="Danchin A."/>
        </authorList>
    </citation>
    <scope>NUCLEOTIDE SEQUENCE [LARGE SCALE GENOMIC DNA]</scope>
    <source>
        <strain>TAC 125</strain>
    </source>
</reference>
<proteinExistence type="inferred from homology"/>
<gene>
    <name evidence="1" type="primary">ruvC</name>
    <name type="ordered locus">PSHAa1877</name>
</gene>
<name>RUVC_PSET1</name>
<organism>
    <name type="scientific">Pseudoalteromonas translucida (strain TAC 125)</name>
    <dbReference type="NCBI Taxonomy" id="326442"/>
    <lineage>
        <taxon>Bacteria</taxon>
        <taxon>Pseudomonadati</taxon>
        <taxon>Pseudomonadota</taxon>
        <taxon>Gammaproteobacteria</taxon>
        <taxon>Alteromonadales</taxon>
        <taxon>Pseudoalteromonadaceae</taxon>
        <taxon>Pseudoalteromonas</taxon>
    </lineage>
</organism>
<accession>Q3IIJ0</accession>
<evidence type="ECO:0000255" key="1">
    <source>
        <dbReference type="HAMAP-Rule" id="MF_00034"/>
    </source>
</evidence>
<comment type="function">
    <text evidence="1">The RuvA-RuvB-RuvC complex processes Holliday junction (HJ) DNA during genetic recombination and DNA repair. Endonuclease that resolves HJ intermediates. Cleaves cruciform DNA by making single-stranded nicks across the HJ at symmetrical positions within the homologous arms, yielding a 5'-phosphate and a 3'-hydroxyl group; requires a central core of homology in the junction. The consensus cleavage sequence is 5'-(A/T)TT(C/G)-3'. Cleavage occurs on the 3'-side of the TT dinucleotide at the point of strand exchange. HJ branch migration catalyzed by RuvA-RuvB allows RuvC to scan DNA until it finds its consensus sequence, where it cleaves and resolves the cruciform DNA.</text>
</comment>
<comment type="catalytic activity">
    <reaction evidence="1">
        <text>Endonucleolytic cleavage at a junction such as a reciprocal single-stranded crossover between two homologous DNA duplexes (Holliday junction).</text>
        <dbReference type="EC" id="3.1.21.10"/>
    </reaction>
</comment>
<comment type="cofactor">
    <cofactor evidence="1">
        <name>Mg(2+)</name>
        <dbReference type="ChEBI" id="CHEBI:18420"/>
    </cofactor>
    <text evidence="1">Binds 2 Mg(2+) ion per subunit.</text>
</comment>
<comment type="subunit">
    <text evidence="1">Homodimer which binds Holliday junction (HJ) DNA. The HJ becomes 2-fold symmetrical on binding to RuvC with unstacked arms; it has a different conformation from HJ DNA in complex with RuvA. In the full resolvosome a probable DNA-RuvA(4)-RuvB(12)-RuvC(2) complex forms which resolves the HJ.</text>
</comment>
<comment type="subcellular location">
    <subcellularLocation>
        <location evidence="1">Cytoplasm</location>
    </subcellularLocation>
</comment>
<comment type="similarity">
    <text evidence="1">Belongs to the RuvC family.</text>
</comment>
<keyword id="KW-0963">Cytoplasm</keyword>
<keyword id="KW-0227">DNA damage</keyword>
<keyword id="KW-0233">DNA recombination</keyword>
<keyword id="KW-0234">DNA repair</keyword>
<keyword id="KW-0238">DNA-binding</keyword>
<keyword id="KW-0255">Endonuclease</keyword>
<keyword id="KW-0378">Hydrolase</keyword>
<keyword id="KW-0460">Magnesium</keyword>
<keyword id="KW-0479">Metal-binding</keyword>
<keyword id="KW-0540">Nuclease</keyword>
<keyword id="KW-1185">Reference proteome</keyword>
<dbReference type="EC" id="3.1.21.10" evidence="1"/>
<dbReference type="EMBL" id="CR954246">
    <property type="protein sequence ID" value="CAI86947.1"/>
    <property type="molecule type" value="Genomic_DNA"/>
</dbReference>
<dbReference type="SMR" id="Q3IIJ0"/>
<dbReference type="STRING" id="326442.PSHAa1877"/>
<dbReference type="KEGG" id="pha:PSHAa1877"/>
<dbReference type="eggNOG" id="COG0817">
    <property type="taxonomic scope" value="Bacteria"/>
</dbReference>
<dbReference type="HOGENOM" id="CLU_091257_2_1_6"/>
<dbReference type="BioCyc" id="PHAL326442:PSHA_RS09240-MONOMER"/>
<dbReference type="Proteomes" id="UP000006843">
    <property type="component" value="Chromosome I"/>
</dbReference>
<dbReference type="GO" id="GO:0005737">
    <property type="term" value="C:cytoplasm"/>
    <property type="evidence" value="ECO:0007669"/>
    <property type="project" value="UniProtKB-SubCell"/>
</dbReference>
<dbReference type="GO" id="GO:0048476">
    <property type="term" value="C:Holliday junction resolvase complex"/>
    <property type="evidence" value="ECO:0007669"/>
    <property type="project" value="UniProtKB-UniRule"/>
</dbReference>
<dbReference type="GO" id="GO:0008821">
    <property type="term" value="F:crossover junction DNA endonuclease activity"/>
    <property type="evidence" value="ECO:0007669"/>
    <property type="project" value="UniProtKB-UniRule"/>
</dbReference>
<dbReference type="GO" id="GO:0003677">
    <property type="term" value="F:DNA binding"/>
    <property type="evidence" value="ECO:0007669"/>
    <property type="project" value="UniProtKB-KW"/>
</dbReference>
<dbReference type="GO" id="GO:0000287">
    <property type="term" value="F:magnesium ion binding"/>
    <property type="evidence" value="ECO:0007669"/>
    <property type="project" value="UniProtKB-UniRule"/>
</dbReference>
<dbReference type="GO" id="GO:0006310">
    <property type="term" value="P:DNA recombination"/>
    <property type="evidence" value="ECO:0007669"/>
    <property type="project" value="UniProtKB-UniRule"/>
</dbReference>
<dbReference type="GO" id="GO:0006281">
    <property type="term" value="P:DNA repair"/>
    <property type="evidence" value="ECO:0007669"/>
    <property type="project" value="UniProtKB-UniRule"/>
</dbReference>
<dbReference type="CDD" id="cd16962">
    <property type="entry name" value="RuvC"/>
    <property type="match status" value="1"/>
</dbReference>
<dbReference type="FunFam" id="3.30.420.10:FF:000002">
    <property type="entry name" value="Crossover junction endodeoxyribonuclease RuvC"/>
    <property type="match status" value="1"/>
</dbReference>
<dbReference type="Gene3D" id="3.30.420.10">
    <property type="entry name" value="Ribonuclease H-like superfamily/Ribonuclease H"/>
    <property type="match status" value="1"/>
</dbReference>
<dbReference type="HAMAP" id="MF_00034">
    <property type="entry name" value="RuvC"/>
    <property type="match status" value="1"/>
</dbReference>
<dbReference type="InterPro" id="IPR012337">
    <property type="entry name" value="RNaseH-like_sf"/>
</dbReference>
<dbReference type="InterPro" id="IPR036397">
    <property type="entry name" value="RNaseH_sf"/>
</dbReference>
<dbReference type="InterPro" id="IPR020563">
    <property type="entry name" value="X-over_junc_endoDNase_Mg_BS"/>
</dbReference>
<dbReference type="InterPro" id="IPR002176">
    <property type="entry name" value="X-over_junc_endoDNase_RuvC"/>
</dbReference>
<dbReference type="NCBIfam" id="TIGR00228">
    <property type="entry name" value="ruvC"/>
    <property type="match status" value="1"/>
</dbReference>
<dbReference type="PANTHER" id="PTHR30194">
    <property type="entry name" value="CROSSOVER JUNCTION ENDODEOXYRIBONUCLEASE RUVC"/>
    <property type="match status" value="1"/>
</dbReference>
<dbReference type="PANTHER" id="PTHR30194:SF3">
    <property type="entry name" value="CROSSOVER JUNCTION ENDODEOXYRIBONUCLEASE RUVC"/>
    <property type="match status" value="1"/>
</dbReference>
<dbReference type="Pfam" id="PF02075">
    <property type="entry name" value="RuvC"/>
    <property type="match status" value="1"/>
</dbReference>
<dbReference type="PRINTS" id="PR00696">
    <property type="entry name" value="RSOLVASERUVC"/>
</dbReference>
<dbReference type="SUPFAM" id="SSF53098">
    <property type="entry name" value="Ribonuclease H-like"/>
    <property type="match status" value="1"/>
</dbReference>
<dbReference type="PROSITE" id="PS01321">
    <property type="entry name" value="RUVC"/>
    <property type="match status" value="1"/>
</dbReference>
<protein>
    <recommendedName>
        <fullName evidence="1">Crossover junction endodeoxyribonuclease RuvC</fullName>
        <ecNumber evidence="1">3.1.21.10</ecNumber>
    </recommendedName>
    <alternativeName>
        <fullName evidence="1">Holliday junction nuclease RuvC</fullName>
    </alternativeName>
    <alternativeName>
        <fullName evidence="1">Holliday junction resolvase RuvC</fullName>
    </alternativeName>
</protein>